<comment type="function">
    <text evidence="3 5 6 7">V region of the variable domain of T cell receptor (TR) beta chain that participates in the antigen recognition (PubMed:24600447). Alpha-beta T cell receptors are antigen specific receptors which are essential to the immune response and are present on the cell surface of T lymphocytes. Recognize peptide-major histocompatibility (MH) (pMH) complexes that are displayed by antigen presenting cells (APC), a prerequisite for efficient T cell adaptive immunity against pathogens (PubMed:25493333). Binding of alpha-beta TR to pMH complex initiates TR-CD3 clustering on the cell surface and intracellular activation of LCK that phosphorylates the ITAM motifs of CD3G, CD3D, CD3E and CD247 enabling the recruitment of ZAP70. In turn ZAP70 phosphorylates LAT, which recruits numerous signaling molecules to form the LAT signalosome. The LAT signalosome propagates signal branching to three major signaling pathways, the calcium, the mitogen-activated protein kinase (MAPK) kinase and the nuclear factor NF-kappa-B (NF-kB) pathways, leading to the mobilization of transcription factors that are critical for gene expression and essential for T cell growth and differentiation (PubMed:23524462). The T cell repertoire is generated in the thymus, by V-(D)-J rearrangement. This repertoire is then shaped by intrathymic selection events to generate a peripheral T cell pool of self-MH restricted, non-autoaggressive T cells. Post-thymic interaction of alpha-beta TR with the pMH complexes shapes TR structural and functional avidity (PubMed:15040585).</text>
</comment>
<comment type="subunit">
    <text evidence="4">Alpha-beta TR is a heterodimer composed of an alpha and beta chain; disulfide-linked. The alpha-beta TR is associated with the transmembrane signaling CD3 coreceptor proteins to form the TR-CD3 (TcR or TCR). The assembly of alpha-beta TR heterodimers with CD3 occurs in the endoplasmic reticulum where a single alpha-beta TR heterodimer associates with one CD3D-CD3E heterodimer, one CD3G-CD3E heterodimer and one CD247 homodimer forming a stable octameric structure. CD3D-CD3E and CD3G-CD3E heterodimers preferentially associate with TR alpha and TR beta chains, respectively. The association of the CD247 homodimer is the last step of TcR assembly in the endoplasmic reticulum and is required for transport to the cell surface.</text>
</comment>
<comment type="subcellular location">
    <subcellularLocation>
        <location evidence="4">Cell membrane</location>
    </subcellularLocation>
</comment>
<comment type="polymorphism">
    <text evidence="9">There are several alleles. The sequence shown is that of IMGT allele TRBV7-7*01.</text>
</comment>
<accession>A0A0K0K1E9</accession>
<accession>A0A075B6M6</accession>
<accession>A0A0A6YYM7</accession>
<accession>A0A5A0</accession>
<feature type="signal peptide" evidence="1">
    <location>
        <begin position="1"/>
        <end position="21"/>
    </location>
</feature>
<feature type="chain" id="PRO_5014028880" description="T cell receptor beta variable 7-7" evidence="1">
    <location>
        <begin position="22"/>
        <end position="115"/>
    </location>
</feature>
<feature type="domain" description="Ig-like" evidence="2">
    <location>
        <begin position="22"/>
        <end position="115" status="greater than"/>
    </location>
</feature>
<feature type="disulfide bond" evidence="2">
    <location>
        <begin position="42"/>
        <end position="111"/>
    </location>
</feature>
<feature type="non-terminal residue">
    <location>
        <position position="115"/>
    </location>
</feature>
<name>TVB77_HUMAN</name>
<dbReference type="EMBL" id="AC244196">
    <property type="status" value="NOT_ANNOTATED_CDS"/>
    <property type="molecule type" value="Genomic_DNA"/>
</dbReference>
<dbReference type="SMR" id="A0A0K0K1E9"/>
<dbReference type="FunCoup" id="A0A0K0K1E9">
    <property type="interactions" value="396"/>
</dbReference>
<dbReference type="IMGT_GENE-DB" id="TRBV7-7"/>
<dbReference type="BioMuta" id="TRBV7-7"/>
<dbReference type="MassIVE" id="A0A0K0K1E9"/>
<dbReference type="Ensembl" id="ENST00000390377.1">
    <property type="protein sequence ID" value="ENSP00000374900.1"/>
    <property type="gene ID" value="ENSG00000253291.1"/>
</dbReference>
<dbReference type="Ensembl" id="ENST00000631548.1">
    <property type="protein sequence ID" value="ENSP00000488424.1"/>
    <property type="gene ID" value="ENSG00000282179.1"/>
</dbReference>
<dbReference type="UCSC" id="uc064isl.1">
    <property type="organism name" value="human"/>
</dbReference>
<dbReference type="AGR" id="HGNC:12241"/>
<dbReference type="GeneCards" id="TRBV7-7"/>
<dbReference type="HGNC" id="HGNC:12241">
    <property type="gene designation" value="TRBV7-7"/>
</dbReference>
<dbReference type="HPA" id="ENSG00000253291">
    <property type="expression patterns" value="Tissue enriched (lymphoid)"/>
</dbReference>
<dbReference type="neXtProt" id="NX_A0A0K0K1E9"/>
<dbReference type="OpenTargets" id="ENSG00000253291"/>
<dbReference type="VEuPathDB" id="HostDB:ENSG00000253291"/>
<dbReference type="GeneTree" id="ENSGT00940000154460"/>
<dbReference type="InParanoid" id="A0A0K0K1E9"/>
<dbReference type="OMA" id="NRLLCWA"/>
<dbReference type="OrthoDB" id="9631130at2759"/>
<dbReference type="PAN-GO" id="A0A0K0K1E9">
    <property type="GO annotations" value="2 GO annotations based on evolutionary models"/>
</dbReference>
<dbReference type="ChiTaRS" id="TRBV7-7">
    <property type="organism name" value="human"/>
</dbReference>
<dbReference type="Pharos" id="A0A0K0K1E9">
    <property type="development level" value="Tdark"/>
</dbReference>
<dbReference type="PRO" id="PR:A0A0K0K1E9"/>
<dbReference type="Proteomes" id="UP000005640">
    <property type="component" value="Chromosome 7"/>
</dbReference>
<dbReference type="RNAct" id="A0A0K0K1E9">
    <property type="molecule type" value="protein"/>
</dbReference>
<dbReference type="Bgee" id="ENSG00000253291">
    <property type="expression patterns" value="Expressed in granulocyte and 60 other cell types or tissues"/>
</dbReference>
<dbReference type="GO" id="GO:0005886">
    <property type="term" value="C:plasma membrane"/>
    <property type="evidence" value="ECO:0000318"/>
    <property type="project" value="GO_Central"/>
</dbReference>
<dbReference type="GO" id="GO:0042101">
    <property type="term" value="C:T cell receptor complex"/>
    <property type="evidence" value="ECO:0007669"/>
    <property type="project" value="UniProtKB-KW"/>
</dbReference>
<dbReference type="GO" id="GO:0002250">
    <property type="term" value="P:adaptive immune response"/>
    <property type="evidence" value="ECO:0007669"/>
    <property type="project" value="UniProtKB-KW"/>
</dbReference>
<dbReference type="GO" id="GO:0007166">
    <property type="term" value="P:cell surface receptor signaling pathway"/>
    <property type="evidence" value="ECO:0000318"/>
    <property type="project" value="GO_Central"/>
</dbReference>
<dbReference type="FunFam" id="2.60.40.10:FF:002491">
    <property type="entry name" value="T cell receptor beta variable 12-4"/>
    <property type="match status" value="1"/>
</dbReference>
<dbReference type="Gene3D" id="2.60.40.10">
    <property type="entry name" value="Immunoglobulins"/>
    <property type="match status" value="1"/>
</dbReference>
<dbReference type="InterPro" id="IPR007110">
    <property type="entry name" value="Ig-like_dom"/>
</dbReference>
<dbReference type="InterPro" id="IPR036179">
    <property type="entry name" value="Ig-like_dom_sf"/>
</dbReference>
<dbReference type="InterPro" id="IPR013783">
    <property type="entry name" value="Ig-like_fold"/>
</dbReference>
<dbReference type="InterPro" id="IPR013106">
    <property type="entry name" value="Ig_V-set"/>
</dbReference>
<dbReference type="InterPro" id="IPR050413">
    <property type="entry name" value="TCR_beta_variable"/>
</dbReference>
<dbReference type="PANTHER" id="PTHR23268:SF20">
    <property type="entry name" value="T CELL RECEPTOR BETA VARIABLE 7-4-RELATED"/>
    <property type="match status" value="1"/>
</dbReference>
<dbReference type="PANTHER" id="PTHR23268">
    <property type="entry name" value="T-CELL RECEPTOR BETA CHAIN"/>
    <property type="match status" value="1"/>
</dbReference>
<dbReference type="Pfam" id="PF07686">
    <property type="entry name" value="V-set"/>
    <property type="match status" value="1"/>
</dbReference>
<dbReference type="SMART" id="SM00406">
    <property type="entry name" value="IGv"/>
    <property type="match status" value="1"/>
</dbReference>
<dbReference type="SUPFAM" id="SSF48726">
    <property type="entry name" value="Immunoglobulin"/>
    <property type="match status" value="1"/>
</dbReference>
<dbReference type="PROSITE" id="PS50835">
    <property type="entry name" value="IG_LIKE"/>
    <property type="match status" value="1"/>
</dbReference>
<gene>
    <name evidence="8" type="primary">TRBV7-7</name>
</gene>
<protein>
    <recommendedName>
        <fullName evidence="8">T cell receptor beta variable 7-7</fullName>
    </recommendedName>
</protein>
<organism>
    <name type="scientific">Homo sapiens</name>
    <name type="common">Human</name>
    <dbReference type="NCBI Taxonomy" id="9606"/>
    <lineage>
        <taxon>Eukaryota</taxon>
        <taxon>Metazoa</taxon>
        <taxon>Chordata</taxon>
        <taxon>Craniata</taxon>
        <taxon>Vertebrata</taxon>
        <taxon>Euteleostomi</taxon>
        <taxon>Mammalia</taxon>
        <taxon>Eutheria</taxon>
        <taxon>Euarchontoglires</taxon>
        <taxon>Primates</taxon>
        <taxon>Haplorrhini</taxon>
        <taxon>Catarrhini</taxon>
        <taxon>Hominidae</taxon>
        <taxon>Homo</taxon>
    </lineage>
</organism>
<proteinExistence type="inferred from homology"/>
<reference key="1">
    <citation type="journal article" date="2003" name="Nature">
        <title>The DNA sequence of human chromosome 7.</title>
        <authorList>
            <person name="Hillier L.W."/>
            <person name="Fulton R.S."/>
            <person name="Fulton L.A."/>
            <person name="Graves T.A."/>
            <person name="Pepin K.H."/>
            <person name="Wagner-McPherson C."/>
            <person name="Layman D."/>
            <person name="Maas J."/>
            <person name="Jaeger S."/>
            <person name="Walker R."/>
            <person name="Wylie K."/>
            <person name="Sekhon M."/>
            <person name="Becker M.C."/>
            <person name="O'Laughlin M.D."/>
            <person name="Schaller M.E."/>
            <person name="Fewell G.A."/>
            <person name="Delehaunty K.D."/>
            <person name="Miner T.L."/>
            <person name="Nash W.E."/>
            <person name="Cordes M."/>
            <person name="Du H."/>
            <person name="Sun H."/>
            <person name="Edwards J."/>
            <person name="Bradshaw-Cordum H."/>
            <person name="Ali J."/>
            <person name="Andrews S."/>
            <person name="Isak A."/>
            <person name="Vanbrunt A."/>
            <person name="Nguyen C."/>
            <person name="Du F."/>
            <person name="Lamar B."/>
            <person name="Courtney L."/>
            <person name="Kalicki J."/>
            <person name="Ozersky P."/>
            <person name="Bielicki L."/>
            <person name="Scott K."/>
            <person name="Holmes A."/>
            <person name="Harkins R."/>
            <person name="Harris A."/>
            <person name="Strong C.M."/>
            <person name="Hou S."/>
            <person name="Tomlinson C."/>
            <person name="Dauphin-Kohlberg S."/>
            <person name="Kozlowicz-Reilly A."/>
            <person name="Leonard S."/>
            <person name="Rohlfing T."/>
            <person name="Rock S.M."/>
            <person name="Tin-Wollam A.-M."/>
            <person name="Abbott A."/>
            <person name="Minx P."/>
            <person name="Maupin R."/>
            <person name="Strowmatt C."/>
            <person name="Latreille P."/>
            <person name="Miller N."/>
            <person name="Johnson D."/>
            <person name="Murray J."/>
            <person name="Woessner J.P."/>
            <person name="Wendl M.C."/>
            <person name="Yang S.-P."/>
            <person name="Schultz B.R."/>
            <person name="Wallis J.W."/>
            <person name="Spieth J."/>
            <person name="Bieri T.A."/>
            <person name="Nelson J.O."/>
            <person name="Berkowicz N."/>
            <person name="Wohldmann P.E."/>
            <person name="Cook L.L."/>
            <person name="Hickenbotham M.T."/>
            <person name="Eldred J."/>
            <person name="Williams D."/>
            <person name="Bedell J.A."/>
            <person name="Mardis E.R."/>
            <person name="Clifton S.W."/>
            <person name="Chissoe S.L."/>
            <person name="Marra M.A."/>
            <person name="Raymond C."/>
            <person name="Haugen E."/>
            <person name="Gillett W."/>
            <person name="Zhou Y."/>
            <person name="James R."/>
            <person name="Phelps K."/>
            <person name="Iadanoto S."/>
            <person name="Bubb K."/>
            <person name="Simms E."/>
            <person name="Levy R."/>
            <person name="Clendenning J."/>
            <person name="Kaul R."/>
            <person name="Kent W.J."/>
            <person name="Furey T.S."/>
            <person name="Baertsch R.A."/>
            <person name="Brent M.R."/>
            <person name="Keibler E."/>
            <person name="Flicek P."/>
            <person name="Bork P."/>
            <person name="Suyama M."/>
            <person name="Bailey J.A."/>
            <person name="Portnoy M.E."/>
            <person name="Torrents D."/>
            <person name="Chinwalla A.T."/>
            <person name="Gish W.R."/>
            <person name="Eddy S.R."/>
            <person name="McPherson J.D."/>
            <person name="Olson M.V."/>
            <person name="Eichler E.E."/>
            <person name="Green E.D."/>
            <person name="Waterston R.H."/>
            <person name="Wilson R.K."/>
        </authorList>
    </citation>
    <scope>NUCLEOTIDE SEQUENCE [LARGE SCALE GENOMIC DNA] (IMGT ALLELE TRBV7-7*01)</scope>
</reference>
<reference key="2">
    <citation type="book" date="2001" name="The T Cell Receptor FactsBook.">
        <title>The T Cell Receptor FactsBook.</title>
        <editorList>
            <person name="Lefranc M.P."/>
            <person name="Lefranc G."/>
        </editorList>
        <authorList>
            <person name="Lefranc M.P."/>
            <person name="Lefranc G."/>
        </authorList>
    </citation>
    <scope>NOMENCLATURE</scope>
</reference>
<reference key="3">
    <citation type="journal article" date="2004" name="Nat. Rev. Immunol.">
        <title>The many important facets of T-cell repertoire diversity.</title>
        <authorList>
            <person name="Nikolich-Zugich J."/>
            <person name="Slifka M.K."/>
            <person name="Messaoudi I."/>
        </authorList>
    </citation>
    <scope>REVIEW ON T CELL REPERTOIRE DIVERSITY</scope>
</reference>
<reference key="4">
    <citation type="journal article" date="2010" name="Cold Spring Harb. Perspect. Biol.">
        <title>Structural biology of the T-cell receptor: insights into receptor assembly, ligand recognition, and initiation of signaling.</title>
        <authorList>
            <person name="Wucherpfennig K.W."/>
            <person name="Gagnon E."/>
            <person name="Call M.J."/>
            <person name="Huseby E.S."/>
            <person name="Call M.E."/>
        </authorList>
    </citation>
    <scope>REVIEW ON T CELL RECEPTOR-CD3 COMPLEX ASSEMBLY</scope>
    <scope>SUBCELLULAR LOCATION</scope>
</reference>
<reference key="5">
    <citation type="journal article" date="2013" name="Nat. Rev. Immunol.">
        <title>T cell receptor signalling networks: branched, diversified and bounded.</title>
        <authorList>
            <person name="Brownlie R.J."/>
            <person name="Zamoyska R."/>
        </authorList>
    </citation>
    <scope>REVIEW ON T CELL RECEPTOR SIGNALING</scope>
</reference>
<reference key="6">
    <citation type="journal article" date="2014" name="Front. Immunol.">
        <title>Immunoglobulin and T Cell Receptor Genes: IMGT((R)) and the Birth and Rise of Immunoinformatics.</title>
        <authorList>
            <person name="Lefranc M.P."/>
        </authorList>
    </citation>
    <scope>NOMENCLATURE</scope>
</reference>
<reference key="7">
    <citation type="journal article" date="2015" name="Annu. Rev. Immunol.">
        <title>T cell antigen receptor recognition of antigen-presenting molecules.</title>
        <authorList>
            <person name="Rossjohn J."/>
            <person name="Gras S."/>
            <person name="Miles J.J."/>
            <person name="Turner S.J."/>
            <person name="Godfrey D.I."/>
            <person name="McCluskey J."/>
        </authorList>
    </citation>
    <scope>REVIEW ON FUNCTION</scope>
</reference>
<keyword id="KW-1064">Adaptive immunity</keyword>
<keyword id="KW-1003">Cell membrane</keyword>
<keyword id="KW-1015">Disulfide bond</keyword>
<keyword id="KW-0391">Immunity</keyword>
<keyword id="KW-0393">Immunoglobulin domain</keyword>
<keyword id="KW-0472">Membrane</keyword>
<keyword id="KW-0675">Receptor</keyword>
<keyword id="KW-1185">Reference proteome</keyword>
<keyword id="KW-0732">Signal</keyword>
<keyword id="KW-1279">T cell receptor</keyword>
<evidence type="ECO:0000255" key="1"/>
<evidence type="ECO:0000255" key="2">
    <source>
        <dbReference type="PROSITE-ProRule" id="PRU00114"/>
    </source>
</evidence>
<evidence type="ECO:0000303" key="3">
    <source>
    </source>
</evidence>
<evidence type="ECO:0000303" key="4">
    <source>
    </source>
</evidence>
<evidence type="ECO:0000303" key="5">
    <source>
    </source>
</evidence>
<evidence type="ECO:0000303" key="6">
    <source>
    </source>
</evidence>
<evidence type="ECO:0000303" key="7">
    <source>
    </source>
</evidence>
<evidence type="ECO:0000303" key="8">
    <source ref="2"/>
</evidence>
<evidence type="ECO:0000305" key="9"/>
<sequence>MGTSLLCWVVLGFLGTDHTGAGVSQSPRYKVTKRGQDVTLRCDPISSHATLYWYQQALGQGPEFLTYFNYEAQPDKSGLPSDRFSAERPEGSISTLTIQRTEQRDSAMYRCASSL</sequence>